<comment type="function">
    <text evidence="4">Fungal xylanase inhibitor. Possesses competitive inhibiting activity against fungal endo-1,4-beta-D-xylanases belonging to glycoside hydrolase family 11 (GH11). May function in plant defense against secreted fungal pathogen xylanases. Is similar to class III chitinases, but does not exhibit chitinase activity.</text>
</comment>
<comment type="subunit">
    <text>Binds to fungal GH11 xylanases.</text>
</comment>
<comment type="subcellular location">
    <subcellularLocation>
        <location evidence="7">Secreted</location>
    </subcellularLocation>
</comment>
<comment type="tissue specificity">
    <text evidence="5">Constitutively expressed in shoots.</text>
</comment>
<comment type="similarity">
    <text evidence="7">Belongs to the glycosyl hydrolase 18 family. Xylanase inhibitor subfamily.</text>
</comment>
<evidence type="ECO:0000250" key="1">
    <source>
        <dbReference type="UniProtKB" id="Q8L5C6"/>
    </source>
</evidence>
<evidence type="ECO:0000255" key="2"/>
<evidence type="ECO:0000255" key="3">
    <source>
        <dbReference type="PROSITE-ProRule" id="PRU01258"/>
    </source>
</evidence>
<evidence type="ECO:0000269" key="4">
    <source>
    </source>
</evidence>
<evidence type="ECO:0000269" key="5">
    <source>
    </source>
</evidence>
<evidence type="ECO:0000303" key="6">
    <source>
    </source>
</evidence>
<evidence type="ECO:0000305" key="7"/>
<evidence type="ECO:0000312" key="8">
    <source>
        <dbReference type="EMBL" id="ABA95481.1"/>
    </source>
</evidence>
<evidence type="ECO:0000312" key="9">
    <source>
        <dbReference type="EMBL" id="BAT15373.1"/>
    </source>
</evidence>
<evidence type="ECO:0000312" key="10">
    <source>
        <dbReference type="EMBL" id="EAZ19295.1"/>
    </source>
</evidence>
<accession>Q7GCM7</accession>
<accession>A0A0P0Y5K7</accession>
<accession>A0A218MG79</accession>
<accession>O49828</accession>
<accession>Q2QZ60</accession>
<dbReference type="EMBL" id="D55712">
    <property type="protein sequence ID" value="BAA23810.1"/>
    <property type="molecule type" value="mRNA"/>
</dbReference>
<dbReference type="EMBL" id="AB027415">
    <property type="protein sequence ID" value="BAA77768.1"/>
    <property type="molecule type" value="mRNA"/>
</dbReference>
<dbReference type="EMBL" id="AB027416">
    <property type="protein sequence ID" value="BAA77769.1"/>
    <property type="molecule type" value="mRNA"/>
</dbReference>
<dbReference type="EMBL" id="AB027417">
    <property type="protein sequence ID" value="BAA77770.1"/>
    <property type="molecule type" value="mRNA"/>
</dbReference>
<dbReference type="EMBL" id="AB027418">
    <property type="protein sequence ID" value="BAA77771.1"/>
    <property type="molecule type" value="mRNA"/>
</dbReference>
<dbReference type="EMBL" id="AB027419">
    <property type="protein sequence ID" value="BAA77772.1"/>
    <property type="molecule type" value="mRNA"/>
</dbReference>
<dbReference type="EMBL" id="AB027420">
    <property type="protein sequence ID" value="BAA77773.1"/>
    <property type="molecule type" value="mRNA"/>
</dbReference>
<dbReference type="EMBL" id="KY807992">
    <property type="protein sequence ID" value="ASD56699.1"/>
    <property type="molecule type" value="mRNA"/>
</dbReference>
<dbReference type="EMBL" id="AC134045">
    <property type="protein sequence ID" value="AAX95335.1"/>
    <property type="molecule type" value="Genomic_DNA"/>
</dbReference>
<dbReference type="EMBL" id="DP000010">
    <property type="protein sequence ID" value="ABA95481.1"/>
    <property type="molecule type" value="Genomic_DNA"/>
</dbReference>
<dbReference type="EMBL" id="AP008217">
    <property type="protein sequence ID" value="BAF28890.1"/>
    <property type="molecule type" value="Genomic_DNA"/>
</dbReference>
<dbReference type="EMBL" id="AP014967">
    <property type="protein sequence ID" value="BAT15373.1"/>
    <property type="molecule type" value="Genomic_DNA"/>
</dbReference>
<dbReference type="EMBL" id="CM000148">
    <property type="protein sequence ID" value="EAZ19295.1"/>
    <property type="molecule type" value="Genomic_DNA"/>
</dbReference>
<dbReference type="EMBL" id="AK063939">
    <property type="protein sequence ID" value="BAG88922.1"/>
    <property type="molecule type" value="mRNA"/>
</dbReference>
<dbReference type="EMBL" id="AK102862">
    <property type="protein sequence ID" value="BAG95753.1"/>
    <property type="molecule type" value="mRNA"/>
</dbReference>
<dbReference type="PIR" id="JC5845">
    <property type="entry name" value="JC5845"/>
</dbReference>
<dbReference type="RefSeq" id="XP_015615153.1">
    <property type="nucleotide sequence ID" value="XM_015759667.1"/>
</dbReference>
<dbReference type="SMR" id="Q7GCM7"/>
<dbReference type="FunCoup" id="Q7GCM7">
    <property type="interactions" value="131"/>
</dbReference>
<dbReference type="STRING" id="39947.Q7GCM7"/>
<dbReference type="CAZy" id="GH18">
    <property type="family name" value="Glycoside Hydrolase Family 18"/>
</dbReference>
<dbReference type="PaxDb" id="39947-Q7GCM7"/>
<dbReference type="EnsemblPlants" id="Os11t0701800-01">
    <property type="protein sequence ID" value="Os11t0701800-01"/>
    <property type="gene ID" value="Os11g0701800"/>
</dbReference>
<dbReference type="Gramene" id="Os11t0701800-01">
    <property type="protein sequence ID" value="Os11t0701800-01"/>
    <property type="gene ID" value="Os11g0701800"/>
</dbReference>
<dbReference type="KEGG" id="dosa:Os11g0701800"/>
<dbReference type="eggNOG" id="KOG4701">
    <property type="taxonomic scope" value="Eukaryota"/>
</dbReference>
<dbReference type="HOGENOM" id="CLU_007818_0_0_1"/>
<dbReference type="InParanoid" id="Q7GCM7"/>
<dbReference type="OMA" id="AGVMEQW"/>
<dbReference type="OrthoDB" id="6020543at2759"/>
<dbReference type="Proteomes" id="UP000000763">
    <property type="component" value="Chromosome 11"/>
</dbReference>
<dbReference type="Proteomes" id="UP000007752">
    <property type="component" value="Chromosome 11"/>
</dbReference>
<dbReference type="Proteomes" id="UP000059680">
    <property type="component" value="Chromosome 11"/>
</dbReference>
<dbReference type="ExpressionAtlas" id="Q7GCM7">
    <property type="expression patterns" value="baseline and differential"/>
</dbReference>
<dbReference type="GO" id="GO:0005576">
    <property type="term" value="C:extracellular region"/>
    <property type="evidence" value="ECO:0000318"/>
    <property type="project" value="GO_Central"/>
</dbReference>
<dbReference type="GO" id="GO:0004857">
    <property type="term" value="F:enzyme inhibitor activity"/>
    <property type="evidence" value="ECO:0000314"/>
    <property type="project" value="UniProtKB"/>
</dbReference>
<dbReference type="GO" id="GO:0005975">
    <property type="term" value="P:carbohydrate metabolic process"/>
    <property type="evidence" value="ECO:0007669"/>
    <property type="project" value="InterPro"/>
</dbReference>
<dbReference type="GO" id="GO:0050832">
    <property type="term" value="P:defense response to fungus"/>
    <property type="evidence" value="ECO:0000314"/>
    <property type="project" value="UniProtKB"/>
</dbReference>
<dbReference type="CDD" id="cd02877">
    <property type="entry name" value="GH18_hevamine_XipI_class_III"/>
    <property type="match status" value="1"/>
</dbReference>
<dbReference type="FunFam" id="3.20.20.80:FF:000044">
    <property type="entry name" value="Chitinase III C10701-rice"/>
    <property type="match status" value="1"/>
</dbReference>
<dbReference type="Gene3D" id="3.20.20.80">
    <property type="entry name" value="Glycosidases"/>
    <property type="match status" value="1"/>
</dbReference>
<dbReference type="InterPro" id="IPR045321">
    <property type="entry name" value="Cts1-like"/>
</dbReference>
<dbReference type="InterPro" id="IPR001223">
    <property type="entry name" value="Glyco_hydro18_cat"/>
</dbReference>
<dbReference type="InterPro" id="IPR017853">
    <property type="entry name" value="Glycoside_hydrolase_SF"/>
</dbReference>
<dbReference type="InterPro" id="IPR050542">
    <property type="entry name" value="Glycosyl_Hydrlase18_Chitinase"/>
</dbReference>
<dbReference type="PANTHER" id="PTHR45708">
    <property type="entry name" value="ENDOCHITINASE"/>
    <property type="match status" value="1"/>
</dbReference>
<dbReference type="PANTHER" id="PTHR45708:SF4">
    <property type="entry name" value="XYLANASE INHIBITOR PROTEIN 1"/>
    <property type="match status" value="1"/>
</dbReference>
<dbReference type="Pfam" id="PF00704">
    <property type="entry name" value="Glyco_hydro_18"/>
    <property type="match status" value="1"/>
</dbReference>
<dbReference type="SUPFAM" id="SSF51445">
    <property type="entry name" value="(Trans)glycosidases"/>
    <property type="match status" value="1"/>
</dbReference>
<dbReference type="PROSITE" id="PS51910">
    <property type="entry name" value="GH18_2"/>
    <property type="match status" value="1"/>
</dbReference>
<proteinExistence type="evidence at protein level"/>
<organism>
    <name type="scientific">Oryza sativa subsp. japonica</name>
    <name type="common">Rice</name>
    <dbReference type="NCBI Taxonomy" id="39947"/>
    <lineage>
        <taxon>Eukaryota</taxon>
        <taxon>Viridiplantae</taxon>
        <taxon>Streptophyta</taxon>
        <taxon>Embryophyta</taxon>
        <taxon>Tracheophyta</taxon>
        <taxon>Spermatophyta</taxon>
        <taxon>Magnoliopsida</taxon>
        <taxon>Liliopsida</taxon>
        <taxon>Poales</taxon>
        <taxon>Poaceae</taxon>
        <taxon>BOP clade</taxon>
        <taxon>Oryzoideae</taxon>
        <taxon>Oryzeae</taxon>
        <taxon>Oryzinae</taxon>
        <taxon>Oryza</taxon>
        <taxon>Oryza sativa</taxon>
    </lineage>
</organism>
<protein>
    <recommendedName>
        <fullName evidence="6">Xylanase inhibitor protein 1</fullName>
        <shortName evidence="6">XIP-I</shortName>
    </recommendedName>
    <alternativeName>
        <fullName evidence="7">Class III chitinase homolog a</fullName>
    </alternativeName>
    <alternativeName>
        <fullName evidence="6">RIXI protein</fullName>
    </alternativeName>
</protein>
<sequence length="304" mass="33947">MVALGRRSWLVPLAMVLAVSSCLAGPAMAAGKTGQMTVFWGRNKNEGTLKETCDTGLYTTVVISFYSVFGHGRYWGDLSGHDLRVIGADIKHCQSKNIFVFLSIGGAGKDYSLPTSKSAADVADNIWNAHMDGRRPGVFRPFGDAAVDGIDFFIDQGAPDHYDDLARNLYAYNKMYRARTPVRLTATVRCAFPDPRMKKALDTKLFERIHVRFYDDATCSYNHAGLAGVMAQWNKWTARYPGSHVYLGLAAANVPGKNDNVFIKQLYYDLLPNVQKAKNYGGIMLWDRFYDKQTGYGKTVKYWA</sequence>
<gene>
    <name evidence="6" type="primary">RIXI</name>
    <name evidence="7" type="synonym">Chib3H-a</name>
    <name evidence="9" type="ordered locus">Os11g0701800</name>
    <name evidence="8" type="ordered locus">LOC_Os11g47580</name>
    <name evidence="10" type="ORF">OsJ_34838</name>
</gene>
<keyword id="KW-1015">Disulfide bond</keyword>
<keyword id="KW-0611">Plant defense</keyword>
<keyword id="KW-1185">Reference proteome</keyword>
<keyword id="KW-0964">Secreted</keyword>
<keyword id="KW-0732">Signal</keyword>
<name>XIP1_ORYSJ</name>
<feature type="signal peptide" evidence="2">
    <location>
        <begin position="1"/>
        <end position="29"/>
    </location>
</feature>
<feature type="chain" id="PRO_0000011991" description="Xylanase inhibitor protein 1">
    <location>
        <begin position="30"/>
        <end position="304"/>
    </location>
</feature>
<feature type="domain" description="GH18" evidence="3">
    <location>
        <begin position="34"/>
        <end position="304"/>
    </location>
</feature>
<feature type="disulfide bond" evidence="1">
    <location>
        <begin position="53"/>
        <end position="93"/>
    </location>
</feature>
<feature type="disulfide bond" evidence="1">
    <location>
        <begin position="190"/>
        <end position="219"/>
    </location>
</feature>
<reference key="1">
    <citation type="journal article" date="1997" name="DNA Res.">
        <title>Rice class III chitinase homologues isolated by random cloning of rice cDNAs.</title>
        <authorList>
            <person name="Nagasaki H."/>
            <person name="Yamamoto K."/>
            <person name="Shomura A."/>
            <person name="Koga-Ban Y."/>
            <person name="Takasuga A."/>
            <person name="Yano M."/>
            <person name="Minobe Y."/>
            <person name="Sasaki T."/>
        </authorList>
    </citation>
    <scope>NUCLEOTIDE SEQUENCE [MRNA]</scope>
    <source>
        <strain>cv. Nipponbare</strain>
        <tissue>Callus</tissue>
    </source>
</reference>
<reference key="2">
    <citation type="submission" date="2017-03" db="EMBL/GenBank/DDBJ databases">
        <title>Recombinant RIXI xylanase inhibitor and its inhibitorial activity to family 11 xylanases.</title>
        <authorList>
            <person name="Huo W."/>
        </authorList>
    </citation>
    <scope>NUCLEOTIDE SEQUENCE [MRNA]</scope>
</reference>
<reference key="3">
    <citation type="journal article" date="2005" name="BMC Biol.">
        <title>The sequence of rice chromosomes 11 and 12, rich in disease resistance genes and recent gene duplications.</title>
        <authorList>
            <consortium name="The rice chromosomes 11 and 12 sequencing consortia"/>
        </authorList>
    </citation>
    <scope>NUCLEOTIDE SEQUENCE [LARGE SCALE GENOMIC DNA]</scope>
    <source>
        <strain>cv. Nipponbare</strain>
    </source>
</reference>
<reference key="4">
    <citation type="journal article" date="2005" name="Nature">
        <title>The map-based sequence of the rice genome.</title>
        <authorList>
            <consortium name="International rice genome sequencing project (IRGSP)"/>
        </authorList>
    </citation>
    <scope>NUCLEOTIDE SEQUENCE [LARGE SCALE GENOMIC DNA]</scope>
    <source>
        <strain>cv. Nipponbare</strain>
    </source>
</reference>
<reference key="5">
    <citation type="journal article" date="2008" name="Nucleic Acids Res.">
        <title>The rice annotation project database (RAP-DB): 2008 update.</title>
        <authorList>
            <consortium name="The rice annotation project (RAP)"/>
        </authorList>
    </citation>
    <scope>GENOME REANNOTATION</scope>
    <source>
        <strain>cv. Nipponbare</strain>
    </source>
</reference>
<reference key="6">
    <citation type="journal article" date="2013" name="Rice">
        <title>Improvement of the Oryza sativa Nipponbare reference genome using next generation sequence and optical map data.</title>
        <authorList>
            <person name="Kawahara Y."/>
            <person name="de la Bastide M."/>
            <person name="Hamilton J.P."/>
            <person name="Kanamori H."/>
            <person name="McCombie W.R."/>
            <person name="Ouyang S."/>
            <person name="Schwartz D.C."/>
            <person name="Tanaka T."/>
            <person name="Wu J."/>
            <person name="Zhou S."/>
            <person name="Childs K.L."/>
            <person name="Davidson R.M."/>
            <person name="Lin H."/>
            <person name="Quesada-Ocampo L."/>
            <person name="Vaillancourt B."/>
            <person name="Sakai H."/>
            <person name="Lee S.S."/>
            <person name="Kim J."/>
            <person name="Numa H."/>
            <person name="Itoh T."/>
            <person name="Buell C.R."/>
            <person name="Matsumoto T."/>
        </authorList>
    </citation>
    <scope>GENOME REANNOTATION</scope>
    <source>
        <strain>cv. Nipponbare</strain>
    </source>
</reference>
<reference key="7">
    <citation type="journal article" date="2005" name="PLoS Biol.">
        <title>The genomes of Oryza sativa: a history of duplications.</title>
        <authorList>
            <person name="Yu J."/>
            <person name="Wang J."/>
            <person name="Lin W."/>
            <person name="Li S."/>
            <person name="Li H."/>
            <person name="Zhou J."/>
            <person name="Ni P."/>
            <person name="Dong W."/>
            <person name="Hu S."/>
            <person name="Zeng C."/>
            <person name="Zhang J."/>
            <person name="Zhang Y."/>
            <person name="Li R."/>
            <person name="Xu Z."/>
            <person name="Li S."/>
            <person name="Li X."/>
            <person name="Zheng H."/>
            <person name="Cong L."/>
            <person name="Lin L."/>
            <person name="Yin J."/>
            <person name="Geng J."/>
            <person name="Li G."/>
            <person name="Shi J."/>
            <person name="Liu J."/>
            <person name="Lv H."/>
            <person name="Li J."/>
            <person name="Wang J."/>
            <person name="Deng Y."/>
            <person name="Ran L."/>
            <person name="Shi X."/>
            <person name="Wang X."/>
            <person name="Wu Q."/>
            <person name="Li C."/>
            <person name="Ren X."/>
            <person name="Wang J."/>
            <person name="Wang X."/>
            <person name="Li D."/>
            <person name="Liu D."/>
            <person name="Zhang X."/>
            <person name="Ji Z."/>
            <person name="Zhao W."/>
            <person name="Sun Y."/>
            <person name="Zhang Z."/>
            <person name="Bao J."/>
            <person name="Han Y."/>
            <person name="Dong L."/>
            <person name="Ji J."/>
            <person name="Chen P."/>
            <person name="Wu S."/>
            <person name="Liu J."/>
            <person name="Xiao Y."/>
            <person name="Bu D."/>
            <person name="Tan J."/>
            <person name="Yang L."/>
            <person name="Ye C."/>
            <person name="Zhang J."/>
            <person name="Xu J."/>
            <person name="Zhou Y."/>
            <person name="Yu Y."/>
            <person name="Zhang B."/>
            <person name="Zhuang S."/>
            <person name="Wei H."/>
            <person name="Liu B."/>
            <person name="Lei M."/>
            <person name="Yu H."/>
            <person name="Li Y."/>
            <person name="Xu H."/>
            <person name="Wei S."/>
            <person name="He X."/>
            <person name="Fang L."/>
            <person name="Zhang Z."/>
            <person name="Zhang Y."/>
            <person name="Huang X."/>
            <person name="Su Z."/>
            <person name="Tong W."/>
            <person name="Li J."/>
            <person name="Tong Z."/>
            <person name="Li S."/>
            <person name="Ye J."/>
            <person name="Wang L."/>
            <person name="Fang L."/>
            <person name="Lei T."/>
            <person name="Chen C.-S."/>
            <person name="Chen H.-C."/>
            <person name="Xu Z."/>
            <person name="Li H."/>
            <person name="Huang H."/>
            <person name="Zhang F."/>
            <person name="Xu H."/>
            <person name="Li N."/>
            <person name="Zhao C."/>
            <person name="Li S."/>
            <person name="Dong L."/>
            <person name="Huang Y."/>
            <person name="Li L."/>
            <person name="Xi Y."/>
            <person name="Qi Q."/>
            <person name="Li W."/>
            <person name="Zhang B."/>
            <person name="Hu W."/>
            <person name="Zhang Y."/>
            <person name="Tian X."/>
            <person name="Jiao Y."/>
            <person name="Liang X."/>
            <person name="Jin J."/>
            <person name="Gao L."/>
            <person name="Zheng W."/>
            <person name="Hao B."/>
            <person name="Liu S.-M."/>
            <person name="Wang W."/>
            <person name="Yuan L."/>
            <person name="Cao M."/>
            <person name="McDermott J."/>
            <person name="Samudrala R."/>
            <person name="Wang J."/>
            <person name="Wong G.K.-S."/>
            <person name="Yang H."/>
        </authorList>
    </citation>
    <scope>NUCLEOTIDE SEQUENCE [LARGE SCALE GENOMIC DNA]</scope>
    <source>
        <strain>cv. Nipponbare</strain>
    </source>
</reference>
<reference key="8">
    <citation type="journal article" date="2003" name="Science">
        <title>Collection, mapping, and annotation of over 28,000 cDNA clones from japonica rice.</title>
        <authorList>
            <consortium name="The rice full-length cDNA consortium"/>
        </authorList>
    </citation>
    <scope>NUCLEOTIDE SEQUENCE [LARGE SCALE MRNA]</scope>
    <source>
        <strain>cv. Nipponbare</strain>
    </source>
</reference>
<reference key="9">
    <citation type="journal article" date="2005" name="FEBS J.">
        <title>Emergence of a subfamily of xylanase inhibitors within glycoside hydrolase family 18.</title>
        <authorList>
            <person name="Durand A."/>
            <person name="Hughes R.K."/>
            <person name="Roussel A."/>
            <person name="Flatman R."/>
            <person name="Henrissat B."/>
            <person name="Juge N."/>
        </authorList>
    </citation>
    <scope>FUNCTION</scope>
    <scope>INTERACTION WITH FUNGAL XYLANASES</scope>
</reference>
<reference key="10">
    <citation type="journal article" date="2007" name="Plant Cell Physiol.">
        <title>Induction of a novel XIP-type xylanase inhibitor by external ascorbic acid treatment and differential expression of XIP-family genes in rice.</title>
        <authorList>
            <person name="Tokunaga T."/>
            <person name="Esaka M."/>
        </authorList>
    </citation>
    <scope>TISSUE SPECIFICITY</scope>
</reference>